<gene>
    <name type="ordered locus">MexAM1_META1p0181</name>
</gene>
<reference key="1">
    <citation type="journal article" date="1996" name="Microbiology">
        <title>A protein having similarity with methylmalonyl-CoA mutase is required for the assimilation of methanol and ethanol by Methylobacterium extorquens AM1.</title>
        <authorList>
            <person name="Smith L.M."/>
            <person name="Meijer W.G."/>
            <person name="Dijkhuizen L."/>
            <person name="Goodwin P.M."/>
        </authorList>
    </citation>
    <scope>NUCLEOTIDE SEQUENCE [GENOMIC DNA]</scope>
</reference>
<reference key="2">
    <citation type="journal article" date="2009" name="PLoS ONE">
        <title>Methylobacterium genome sequences: a reference blueprint to investigate microbial metabolism of C1 compounds from natural and industrial sources.</title>
        <authorList>
            <person name="Vuilleumier S."/>
            <person name="Chistoserdova L."/>
            <person name="Lee M.-C."/>
            <person name="Bringel F."/>
            <person name="Lajus A."/>
            <person name="Zhou Y."/>
            <person name="Gourion B."/>
            <person name="Barbe V."/>
            <person name="Chang J."/>
            <person name="Cruveiller S."/>
            <person name="Dossat C."/>
            <person name="Gillett W."/>
            <person name="Gruffaz C."/>
            <person name="Haugen E."/>
            <person name="Hourcade E."/>
            <person name="Levy R."/>
            <person name="Mangenot S."/>
            <person name="Muller E."/>
            <person name="Nadalig T."/>
            <person name="Pagni M."/>
            <person name="Penny C."/>
            <person name="Peyraud R."/>
            <person name="Robinson D.G."/>
            <person name="Roche D."/>
            <person name="Rouy Z."/>
            <person name="Saenampechek C."/>
            <person name="Salvignol G."/>
            <person name="Vallenet D."/>
            <person name="Wu Z."/>
            <person name="Marx C.J."/>
            <person name="Vorholt J.A."/>
            <person name="Olson M.V."/>
            <person name="Kaul R."/>
            <person name="Weissenbach J."/>
            <person name="Medigue C."/>
            <person name="Lidstrom M.E."/>
        </authorList>
    </citation>
    <scope>NUCLEOTIDE SEQUENCE [LARGE SCALE GENOMIC DNA]</scope>
    <source>
        <strain>ATCC 14718 / DSM 1338 / JCM 2805 / NCIMB 9133 / AM1</strain>
    </source>
</reference>
<name>Y181_METEA</name>
<keyword id="KW-1185">Reference proteome</keyword>
<keyword id="KW-0732">Signal</keyword>
<proteinExistence type="inferred from homology"/>
<feature type="signal peptide" evidence="1">
    <location>
        <begin position="1"/>
        <end position="23"/>
    </location>
</feature>
<feature type="chain" id="PRO_0000022709" description="Uncharacterized protein MexAM1_META1p0181">
    <location>
        <begin position="24"/>
        <end position="228"/>
    </location>
</feature>
<evidence type="ECO:0000255" key="1"/>
<dbReference type="EMBL" id="U28335">
    <property type="protein sequence ID" value="AAC44088.1"/>
    <property type="molecule type" value="Genomic_DNA"/>
</dbReference>
<dbReference type="EMBL" id="CP001510">
    <property type="protein sequence ID" value="ACS38143.1"/>
    <property type="molecule type" value="Genomic_DNA"/>
</dbReference>
<dbReference type="RefSeq" id="WP_003597281.1">
    <property type="nucleotide sequence ID" value="NC_012808.1"/>
</dbReference>
<dbReference type="SMR" id="Q49116"/>
<dbReference type="STRING" id="272630.MexAM1_META1p0181"/>
<dbReference type="KEGG" id="mea:Mex_1p0181"/>
<dbReference type="eggNOG" id="ENOG5032VFQ">
    <property type="taxonomic scope" value="Bacteria"/>
</dbReference>
<dbReference type="HOGENOM" id="CLU_089264_1_0_5"/>
<dbReference type="OrthoDB" id="5381041at2"/>
<dbReference type="Proteomes" id="UP000009081">
    <property type="component" value="Chromosome"/>
</dbReference>
<dbReference type="InterPro" id="IPR019619">
    <property type="entry name" value="DUF2490"/>
</dbReference>
<dbReference type="Pfam" id="PF10677">
    <property type="entry name" value="DUF2490"/>
    <property type="match status" value="1"/>
</dbReference>
<sequence length="228" mass="25577">MIRHTRLLLASLCLIATGARASAEPVQDGQLWINTTLFGSVGDVAYFAEVQPRIGNGISQLDQIILRPAVGWKVNDALVLYQGYAYVEDHGMRDNVRIEDRSFQEINWKIGEFSGVKVSSRTRFEQRWQSAGRDVGFRLRENLRFAMPLPKDWGGVSAVGWTELFVALNDTDWGTRAGFDRVRAFIGLELPIGGKSTVEIGYLNQTARTQASGIELDHILSLNLFVRY</sequence>
<accession>Q49116</accession>
<accession>C5AP84</accession>
<protein>
    <recommendedName>
        <fullName>Uncharacterized protein MexAM1_META1p0181</fullName>
    </recommendedName>
    <alternativeName>
        <fullName>ORFB</fullName>
    </alternativeName>
</protein>
<organism>
    <name type="scientific">Methylorubrum extorquens (strain ATCC 14718 / DSM 1338 / JCM 2805 / NCIMB 9133 / AM1)</name>
    <name type="common">Methylobacterium extorquens</name>
    <dbReference type="NCBI Taxonomy" id="272630"/>
    <lineage>
        <taxon>Bacteria</taxon>
        <taxon>Pseudomonadati</taxon>
        <taxon>Pseudomonadota</taxon>
        <taxon>Alphaproteobacteria</taxon>
        <taxon>Hyphomicrobiales</taxon>
        <taxon>Methylobacteriaceae</taxon>
        <taxon>Methylorubrum</taxon>
    </lineage>
</organism>